<reference key="1">
    <citation type="submission" date="2005-02" db="EMBL/GenBank/DDBJ databases">
        <title>Phosphatidylinositol 4-kinases of Danio rerio.</title>
        <authorList>
            <person name="Ma H."/>
            <person name="Balla T."/>
        </authorList>
    </citation>
    <scope>NUCLEOTIDE SEQUENCE [MRNA]</scope>
</reference>
<reference key="2">
    <citation type="submission" date="2006-12" db="EMBL/GenBank/DDBJ databases">
        <authorList>
            <consortium name="NIH - Zebrafish Gene Collection (ZGC) project"/>
        </authorList>
    </citation>
    <scope>NUCLEOTIDE SEQUENCE [LARGE SCALE MRNA]</scope>
    <source>
        <tissue>Embryo</tissue>
    </source>
</reference>
<sequence length="501" mass="56199">MMAECDPTDGEPGNGSGDSTPETNFLSSEVPAVLFEKTRSAPSLGLSLNPGAAVRISDSTESVLTELEADGSGEEALLLPGPAGSLSPRAGKEKRTRRNMLSSSSDNLASPGNSSGEFNHFPEDPEFGEIIQRAEQAIENGVFPERISQGSSGSYFVKDPKGKIIGVFKPKSEEPYGHLNPKWTKYFHKVCCPCCFGRGCLIPNQGYLSEAAASLVDQKLGLWIVPKTKVVHLASETFHYNAIDRAKSRGKKYALEKVPKVGRRFHRVGLPPKVGSFQLFVEGYHEADFWLRKFEAEPLPENMRKQLQSQFERLVVLDYVIRNTDRGNDNWLIKYEKPGDGELTEKESEWTDPKDSAIKIAAIDNGLAFPFKHPDEWRAYPFHWAWLPQAKVAFSQETRDLVLSRISDMNFVQDLCEDLYEMFRTDKGFDKTMFEKQMSVMRGQILNLTQALKDGKSPIQLVQMPRVVVERSRSGGQGRVVQLGNAFTQTFHCKRPFFTSW</sequence>
<gene>
    <name type="primary">pi4k2b</name>
    <name type="ORF">zgc:158305</name>
</gene>
<feature type="chain" id="PRO_0000285168" description="Phosphatidylinositol 4-kinase type 2-beta">
    <location>
        <begin position="1"/>
        <end position="501"/>
    </location>
</feature>
<feature type="domain" description="PI3K/PI4K catalytic" evidence="3">
    <location>
        <begin position="141"/>
        <end position="471"/>
    </location>
</feature>
<feature type="region of interest" description="Disordered" evidence="4">
    <location>
        <begin position="1"/>
        <end position="30"/>
    </location>
</feature>
<feature type="region of interest" description="Disordered" evidence="4">
    <location>
        <begin position="65"/>
        <end position="122"/>
    </location>
</feature>
<feature type="region of interest" description="G-loop" evidence="3">
    <location>
        <begin position="147"/>
        <end position="153"/>
    </location>
</feature>
<feature type="region of interest" description="Important for substrate binding" evidence="2">
    <location>
        <begin position="174"/>
        <end position="176"/>
    </location>
</feature>
<feature type="region of interest" description="Important for interaction with membranes" evidence="2">
    <location>
        <begin position="182"/>
        <end position="195"/>
    </location>
</feature>
<feature type="region of interest" description="Important for interaction with membranes" evidence="2">
    <location>
        <begin position="285"/>
        <end position="293"/>
    </location>
</feature>
<feature type="region of interest" description="Catalytic loop" evidence="3">
    <location>
        <begin position="322"/>
        <end position="330"/>
    </location>
</feature>
<feature type="region of interest" description="Activation loop" evidence="3">
    <location>
        <begin position="362"/>
        <end position="382"/>
    </location>
</feature>
<feature type="region of interest" description="Important for interaction with membranes" evidence="2">
    <location>
        <begin position="377"/>
        <end position="386"/>
    </location>
</feature>
<feature type="compositionally biased region" description="Polar residues" evidence="4">
    <location>
        <begin position="17"/>
        <end position="27"/>
    </location>
</feature>
<feature type="compositionally biased region" description="Low complexity" evidence="4">
    <location>
        <begin position="76"/>
        <end position="88"/>
    </location>
</feature>
<feature type="compositionally biased region" description="Polar residues" evidence="4">
    <location>
        <begin position="99"/>
        <end position="117"/>
    </location>
</feature>
<feature type="binding site" evidence="1">
    <location>
        <position position="154"/>
    </location>
    <ligand>
        <name>ATP</name>
        <dbReference type="ChEBI" id="CHEBI:30616"/>
    </ligand>
</feature>
<feature type="binding site" evidence="1">
    <location>
        <position position="169"/>
    </location>
    <ligand>
        <name>ATP</name>
        <dbReference type="ChEBI" id="CHEBI:30616"/>
    </ligand>
</feature>
<feature type="binding site" evidence="1">
    <location>
        <begin position="278"/>
        <end position="281"/>
    </location>
    <ligand>
        <name>ATP</name>
        <dbReference type="ChEBI" id="CHEBI:30616"/>
    </ligand>
</feature>
<feature type="binding site" evidence="1">
    <location>
        <begin position="292"/>
        <end position="293"/>
    </location>
    <ligand>
        <name>ATP</name>
        <dbReference type="ChEBI" id="CHEBI:30616"/>
    </ligand>
</feature>
<feature type="binding site" evidence="1">
    <location>
        <position position="364"/>
    </location>
    <ligand>
        <name>ATP</name>
        <dbReference type="ChEBI" id="CHEBI:30616"/>
    </ligand>
</feature>
<accession>Q49GP5</accession>
<comment type="function">
    <text evidence="1">Contributes to the overall PI4-kinase activity of the cell. This contribution may be especially significant in plasma membrane, endosomal and Golgi compartments. The phosphorylation of phosphatidylinositol (PI) to PI4P is the first committed step in the generation of phosphatidylinositol 4,5-bisphosphate (PIP2), a precursor of the second messenger inositol 1,4,5-trisphosphate (InsP3).</text>
</comment>
<comment type="catalytic activity">
    <reaction evidence="1">
        <text>a 1,2-diacyl-sn-glycero-3-phospho-(1D-myo-inositol) + ATP = a 1,2-diacyl-sn-glycero-3-phospho-(1D-myo-inositol 4-phosphate) + ADP + H(+)</text>
        <dbReference type="Rhea" id="RHEA:19877"/>
        <dbReference type="ChEBI" id="CHEBI:15378"/>
        <dbReference type="ChEBI" id="CHEBI:30616"/>
        <dbReference type="ChEBI" id="CHEBI:57880"/>
        <dbReference type="ChEBI" id="CHEBI:58178"/>
        <dbReference type="ChEBI" id="CHEBI:456216"/>
        <dbReference type="EC" id="2.7.1.67"/>
    </reaction>
    <physiologicalReaction direction="left-to-right" evidence="1">
        <dbReference type="Rhea" id="RHEA:19878"/>
    </physiologicalReaction>
</comment>
<comment type="subcellular location">
    <subcellularLocation>
        <location evidence="1">Cytoplasm</location>
        <location evidence="1">Cytosol</location>
    </subcellularLocation>
    <subcellularLocation>
        <location evidence="1">Golgi apparatus membrane</location>
        <topology evidence="1">Peripheral membrane protein</topology>
    </subcellularLocation>
    <subcellularLocation>
        <location evidence="1">Endoplasmic reticulum membrane</location>
    </subcellularLocation>
    <subcellularLocation>
        <location evidence="1">Cell membrane</location>
    </subcellularLocation>
    <subcellularLocation>
        <location evidence="1">Early endosome membrane</location>
    </subcellularLocation>
</comment>
<comment type="similarity">
    <text evidence="5">Belongs to the PI3/PI4-kinase family. Type II PI4K subfamily.</text>
</comment>
<organism>
    <name type="scientific">Danio rerio</name>
    <name type="common">Zebrafish</name>
    <name type="synonym">Brachydanio rerio</name>
    <dbReference type="NCBI Taxonomy" id="7955"/>
    <lineage>
        <taxon>Eukaryota</taxon>
        <taxon>Metazoa</taxon>
        <taxon>Chordata</taxon>
        <taxon>Craniata</taxon>
        <taxon>Vertebrata</taxon>
        <taxon>Euteleostomi</taxon>
        <taxon>Actinopterygii</taxon>
        <taxon>Neopterygii</taxon>
        <taxon>Teleostei</taxon>
        <taxon>Ostariophysi</taxon>
        <taxon>Cypriniformes</taxon>
        <taxon>Danionidae</taxon>
        <taxon>Danioninae</taxon>
        <taxon>Danio</taxon>
    </lineage>
</organism>
<keyword id="KW-0067">ATP-binding</keyword>
<keyword id="KW-1003">Cell membrane</keyword>
<keyword id="KW-0963">Cytoplasm</keyword>
<keyword id="KW-0256">Endoplasmic reticulum</keyword>
<keyword id="KW-0967">Endosome</keyword>
<keyword id="KW-0333">Golgi apparatus</keyword>
<keyword id="KW-0418">Kinase</keyword>
<keyword id="KW-0443">Lipid metabolism</keyword>
<keyword id="KW-0472">Membrane</keyword>
<keyword id="KW-0547">Nucleotide-binding</keyword>
<keyword id="KW-1185">Reference proteome</keyword>
<keyword id="KW-0808">Transferase</keyword>
<evidence type="ECO:0000250" key="1">
    <source>
        <dbReference type="UniProtKB" id="Q8TCG2"/>
    </source>
</evidence>
<evidence type="ECO:0000250" key="2">
    <source>
        <dbReference type="UniProtKB" id="Q9BTU6"/>
    </source>
</evidence>
<evidence type="ECO:0000255" key="3">
    <source>
        <dbReference type="PROSITE-ProRule" id="PRU00269"/>
    </source>
</evidence>
<evidence type="ECO:0000256" key="4">
    <source>
        <dbReference type="SAM" id="MobiDB-lite"/>
    </source>
</evidence>
<evidence type="ECO:0000305" key="5"/>
<dbReference type="EC" id="2.7.1.67" evidence="1"/>
<dbReference type="EMBL" id="AY929291">
    <property type="protein sequence ID" value="AAY16566.1"/>
    <property type="molecule type" value="mRNA"/>
</dbReference>
<dbReference type="EMBL" id="BC129195">
    <property type="protein sequence ID" value="AAI29196.1"/>
    <property type="molecule type" value="mRNA"/>
</dbReference>
<dbReference type="RefSeq" id="NP_001038950.1">
    <property type="nucleotide sequence ID" value="NM_001045485.2"/>
</dbReference>
<dbReference type="SMR" id="Q49GP5"/>
<dbReference type="FunCoup" id="Q49GP5">
    <property type="interactions" value="2098"/>
</dbReference>
<dbReference type="STRING" id="7955.ENSDARP00000038731"/>
<dbReference type="PaxDb" id="7955-ENSDARP00000038731"/>
<dbReference type="GeneID" id="564750"/>
<dbReference type="KEGG" id="dre:564750"/>
<dbReference type="AGR" id="ZFIN:ZDB-GENE-070112-990"/>
<dbReference type="CTD" id="55300"/>
<dbReference type="ZFIN" id="ZDB-GENE-070112-990">
    <property type="gene designation" value="pi4k2b"/>
</dbReference>
<dbReference type="eggNOG" id="KOG2381">
    <property type="taxonomic scope" value="Eukaryota"/>
</dbReference>
<dbReference type="InParanoid" id="Q49GP5"/>
<dbReference type="OrthoDB" id="3349449at2759"/>
<dbReference type="PhylomeDB" id="Q49GP5"/>
<dbReference type="Reactome" id="R-DRE-1483248">
    <property type="pathway name" value="Synthesis of PIPs at the ER membrane"/>
</dbReference>
<dbReference type="Reactome" id="R-DRE-1660499">
    <property type="pathway name" value="Synthesis of PIPs at the plasma membrane"/>
</dbReference>
<dbReference type="Reactome" id="R-DRE-1660514">
    <property type="pathway name" value="Synthesis of PIPs at the Golgi membrane"/>
</dbReference>
<dbReference type="Reactome" id="R-DRE-1660516">
    <property type="pathway name" value="Synthesis of PIPs at the early endosome membrane"/>
</dbReference>
<dbReference type="PRO" id="PR:Q49GP5"/>
<dbReference type="Proteomes" id="UP000000437">
    <property type="component" value="Chromosome 1"/>
</dbReference>
<dbReference type="GO" id="GO:0005829">
    <property type="term" value="C:cytosol"/>
    <property type="evidence" value="ECO:0000250"/>
    <property type="project" value="UniProtKB"/>
</dbReference>
<dbReference type="GO" id="GO:0031901">
    <property type="term" value="C:early endosome membrane"/>
    <property type="evidence" value="ECO:0007669"/>
    <property type="project" value="UniProtKB-SubCell"/>
</dbReference>
<dbReference type="GO" id="GO:0005789">
    <property type="term" value="C:endoplasmic reticulum membrane"/>
    <property type="evidence" value="ECO:0000250"/>
    <property type="project" value="UniProtKB"/>
</dbReference>
<dbReference type="GO" id="GO:0005768">
    <property type="term" value="C:endosome"/>
    <property type="evidence" value="ECO:0000318"/>
    <property type="project" value="GO_Central"/>
</dbReference>
<dbReference type="GO" id="GO:0000139">
    <property type="term" value="C:Golgi membrane"/>
    <property type="evidence" value="ECO:0000250"/>
    <property type="project" value="UniProtKB"/>
</dbReference>
<dbReference type="GO" id="GO:0005886">
    <property type="term" value="C:plasma membrane"/>
    <property type="evidence" value="ECO:0000250"/>
    <property type="project" value="UniProtKB"/>
</dbReference>
<dbReference type="GO" id="GO:0005802">
    <property type="term" value="C:trans-Golgi network"/>
    <property type="evidence" value="ECO:0000318"/>
    <property type="project" value="GO_Central"/>
</dbReference>
<dbReference type="GO" id="GO:0004430">
    <property type="term" value="F:1-phosphatidylinositol 4-kinase activity"/>
    <property type="evidence" value="ECO:0000250"/>
    <property type="project" value="UniProtKB"/>
</dbReference>
<dbReference type="GO" id="GO:0005524">
    <property type="term" value="F:ATP binding"/>
    <property type="evidence" value="ECO:0007669"/>
    <property type="project" value="UniProtKB-KW"/>
</dbReference>
<dbReference type="GO" id="GO:0007032">
    <property type="term" value="P:endosome organization"/>
    <property type="evidence" value="ECO:0000318"/>
    <property type="project" value="GO_Central"/>
</dbReference>
<dbReference type="GO" id="GO:0007030">
    <property type="term" value="P:Golgi organization"/>
    <property type="evidence" value="ECO:0000318"/>
    <property type="project" value="GO_Central"/>
</dbReference>
<dbReference type="GO" id="GO:0033339">
    <property type="term" value="P:pectoral fin development"/>
    <property type="evidence" value="ECO:0000315"/>
    <property type="project" value="ZFIN"/>
</dbReference>
<dbReference type="GO" id="GO:0046854">
    <property type="term" value="P:phosphatidylinositol phosphate biosynthetic process"/>
    <property type="evidence" value="ECO:0000250"/>
    <property type="project" value="UniProtKB"/>
</dbReference>
<dbReference type="InterPro" id="IPR039756">
    <property type="entry name" value="Lsb6/PI4K2"/>
</dbReference>
<dbReference type="InterPro" id="IPR000403">
    <property type="entry name" value="PI3/4_kinase_cat_dom"/>
</dbReference>
<dbReference type="PANTHER" id="PTHR12865:SF6">
    <property type="entry name" value="PHOSPHATIDYLINOSITOL 4-KINASE TYPE 2-BETA"/>
    <property type="match status" value="1"/>
</dbReference>
<dbReference type="PANTHER" id="PTHR12865">
    <property type="entry name" value="PHOSPHATIDYLINOSITOL 4-KINASE TYPE-II"/>
    <property type="match status" value="1"/>
</dbReference>
<dbReference type="Pfam" id="PF00454">
    <property type="entry name" value="PI3_PI4_kinase"/>
    <property type="match status" value="1"/>
</dbReference>
<dbReference type="SUPFAM" id="SSF56399">
    <property type="entry name" value="ADP-ribosylation"/>
    <property type="match status" value="1"/>
</dbReference>
<dbReference type="PROSITE" id="PS50290">
    <property type="entry name" value="PI3_4_KINASE_3"/>
    <property type="match status" value="1"/>
</dbReference>
<protein>
    <recommendedName>
        <fullName>Phosphatidylinositol 4-kinase type 2-beta</fullName>
        <ecNumber evidence="1">2.7.1.67</ecNumber>
    </recommendedName>
    <alternativeName>
        <fullName>Phosphatidylinositol 4-kinase type II-beta</fullName>
    </alternativeName>
</protein>
<proteinExistence type="evidence at transcript level"/>
<name>P4K2B_DANRE</name>